<protein>
    <recommendedName>
        <fullName>Putative flagellin YvzB</fullName>
    </recommendedName>
</protein>
<comment type="subunit">
    <text evidence="1">Interacts with FliW.</text>
</comment>
<comment type="subcellular location">
    <subcellularLocation>
        <location evidence="3">Bacterial flagellum</location>
    </subcellularLocation>
</comment>
<comment type="disruption phenotype">
    <text evidence="2">Cells lacking this gene form dendritic (branched) swarms more slowly and arrest prematurely on B-medium. Swarms normally on LB medium.</text>
</comment>
<comment type="miscellaneous">
    <text>An N-terminally truncated form of flagellin of unknown function.</text>
</comment>
<comment type="similarity">
    <text evidence="3">Belongs to the bacterial flagellin family.</text>
</comment>
<gene>
    <name type="primary">yvzB</name>
    <name type="ordered locus">BSU35150</name>
</gene>
<feature type="chain" id="PRO_0000388353" description="Putative flagellin YvzB">
    <location>
        <begin position="1"/>
        <end position="160"/>
    </location>
</feature>
<name>YVZB_BACSU</name>
<proteinExistence type="evidence at protein level"/>
<organism>
    <name type="scientific">Bacillus subtilis (strain 168)</name>
    <dbReference type="NCBI Taxonomy" id="224308"/>
    <lineage>
        <taxon>Bacteria</taxon>
        <taxon>Bacillati</taxon>
        <taxon>Bacillota</taxon>
        <taxon>Bacilli</taxon>
        <taxon>Bacillales</taxon>
        <taxon>Bacillaceae</taxon>
        <taxon>Bacillus</taxon>
    </lineage>
</organism>
<keyword id="KW-0975">Bacterial flagellum</keyword>
<keyword id="KW-1185">Reference proteome</keyword>
<accession>O34366</accession>
<dbReference type="EMBL" id="AL009126">
    <property type="protein sequence ID" value="CAB15520.1"/>
    <property type="molecule type" value="Genomic_DNA"/>
</dbReference>
<dbReference type="PIR" id="F70049">
    <property type="entry name" value="F70049"/>
</dbReference>
<dbReference type="RefSeq" id="NP_391395.1">
    <property type="nucleotide sequence ID" value="NC_000964.3"/>
</dbReference>
<dbReference type="SMR" id="O34366"/>
<dbReference type="FunCoup" id="O34366">
    <property type="interactions" value="69"/>
</dbReference>
<dbReference type="STRING" id="224308.BSU35150"/>
<dbReference type="jPOST" id="O34366"/>
<dbReference type="PaxDb" id="224308-BSU35150"/>
<dbReference type="PATRIC" id="fig|224308.179.peg.3805"/>
<dbReference type="eggNOG" id="COG1344">
    <property type="taxonomic scope" value="Bacteria"/>
</dbReference>
<dbReference type="InParanoid" id="O34366"/>
<dbReference type="PhylomeDB" id="O34366"/>
<dbReference type="BioCyc" id="BSUB:BSU35150-MONOMER"/>
<dbReference type="Proteomes" id="UP000001570">
    <property type="component" value="Chromosome"/>
</dbReference>
<dbReference type="GO" id="GO:0009288">
    <property type="term" value="C:bacterial-type flagellum"/>
    <property type="evidence" value="ECO:0007669"/>
    <property type="project" value="UniProtKB-SubCell"/>
</dbReference>
<dbReference type="GO" id="GO:0005198">
    <property type="term" value="F:structural molecule activity"/>
    <property type="evidence" value="ECO:0007669"/>
    <property type="project" value="InterPro"/>
</dbReference>
<dbReference type="Gene3D" id="1.20.1330.10">
    <property type="entry name" value="f41 fragment of flagellin, N-terminal domain"/>
    <property type="match status" value="1"/>
</dbReference>
<dbReference type="Gene3D" id="6.10.10.10">
    <property type="entry name" value="Flagellar export chaperone, C-terminal domain"/>
    <property type="match status" value="1"/>
</dbReference>
<dbReference type="InterPro" id="IPR001492">
    <property type="entry name" value="Flagellin"/>
</dbReference>
<dbReference type="InterPro" id="IPR046358">
    <property type="entry name" value="Flagellin_C"/>
</dbReference>
<dbReference type="InterPro" id="IPR042187">
    <property type="entry name" value="Flagellin_C_sub2"/>
</dbReference>
<dbReference type="PANTHER" id="PTHR42792">
    <property type="entry name" value="FLAGELLIN"/>
    <property type="match status" value="1"/>
</dbReference>
<dbReference type="PANTHER" id="PTHR42792:SF2">
    <property type="entry name" value="FLAGELLIN"/>
    <property type="match status" value="1"/>
</dbReference>
<dbReference type="Pfam" id="PF00700">
    <property type="entry name" value="Flagellin_C"/>
    <property type="match status" value="1"/>
</dbReference>
<dbReference type="SUPFAM" id="SSF64518">
    <property type="entry name" value="Phase 1 flagellin"/>
    <property type="match status" value="1"/>
</dbReference>
<evidence type="ECO:0000269" key="1">
    <source>
    </source>
</evidence>
<evidence type="ECO:0000269" key="2">
    <source>
    </source>
</evidence>
<evidence type="ECO:0000305" key="3"/>
<reference key="1">
    <citation type="journal article" date="1997" name="Nature">
        <title>The complete genome sequence of the Gram-positive bacterium Bacillus subtilis.</title>
        <authorList>
            <person name="Kunst F."/>
            <person name="Ogasawara N."/>
            <person name="Moszer I."/>
            <person name="Albertini A.M."/>
            <person name="Alloni G."/>
            <person name="Azevedo V."/>
            <person name="Bertero M.G."/>
            <person name="Bessieres P."/>
            <person name="Bolotin A."/>
            <person name="Borchert S."/>
            <person name="Borriss R."/>
            <person name="Boursier L."/>
            <person name="Brans A."/>
            <person name="Braun M."/>
            <person name="Brignell S.C."/>
            <person name="Bron S."/>
            <person name="Brouillet S."/>
            <person name="Bruschi C.V."/>
            <person name="Caldwell B."/>
            <person name="Capuano V."/>
            <person name="Carter N.M."/>
            <person name="Choi S.-K."/>
            <person name="Codani J.-J."/>
            <person name="Connerton I.F."/>
            <person name="Cummings N.J."/>
            <person name="Daniel R.A."/>
            <person name="Denizot F."/>
            <person name="Devine K.M."/>
            <person name="Duesterhoeft A."/>
            <person name="Ehrlich S.D."/>
            <person name="Emmerson P.T."/>
            <person name="Entian K.-D."/>
            <person name="Errington J."/>
            <person name="Fabret C."/>
            <person name="Ferrari E."/>
            <person name="Foulger D."/>
            <person name="Fritz C."/>
            <person name="Fujita M."/>
            <person name="Fujita Y."/>
            <person name="Fuma S."/>
            <person name="Galizzi A."/>
            <person name="Galleron N."/>
            <person name="Ghim S.-Y."/>
            <person name="Glaser P."/>
            <person name="Goffeau A."/>
            <person name="Golightly E.J."/>
            <person name="Grandi G."/>
            <person name="Guiseppi G."/>
            <person name="Guy B.J."/>
            <person name="Haga K."/>
            <person name="Haiech J."/>
            <person name="Harwood C.R."/>
            <person name="Henaut A."/>
            <person name="Hilbert H."/>
            <person name="Holsappel S."/>
            <person name="Hosono S."/>
            <person name="Hullo M.-F."/>
            <person name="Itaya M."/>
            <person name="Jones L.-M."/>
            <person name="Joris B."/>
            <person name="Karamata D."/>
            <person name="Kasahara Y."/>
            <person name="Klaerr-Blanchard M."/>
            <person name="Klein C."/>
            <person name="Kobayashi Y."/>
            <person name="Koetter P."/>
            <person name="Koningstein G."/>
            <person name="Krogh S."/>
            <person name="Kumano M."/>
            <person name="Kurita K."/>
            <person name="Lapidus A."/>
            <person name="Lardinois S."/>
            <person name="Lauber J."/>
            <person name="Lazarevic V."/>
            <person name="Lee S.-M."/>
            <person name="Levine A."/>
            <person name="Liu H."/>
            <person name="Masuda S."/>
            <person name="Mauel C."/>
            <person name="Medigue C."/>
            <person name="Medina N."/>
            <person name="Mellado R.P."/>
            <person name="Mizuno M."/>
            <person name="Moestl D."/>
            <person name="Nakai S."/>
            <person name="Noback M."/>
            <person name="Noone D."/>
            <person name="O'Reilly M."/>
            <person name="Ogawa K."/>
            <person name="Ogiwara A."/>
            <person name="Oudega B."/>
            <person name="Park S.-H."/>
            <person name="Parro V."/>
            <person name="Pohl T.M."/>
            <person name="Portetelle D."/>
            <person name="Porwollik S."/>
            <person name="Prescott A.M."/>
            <person name="Presecan E."/>
            <person name="Pujic P."/>
            <person name="Purnelle B."/>
            <person name="Rapoport G."/>
            <person name="Rey M."/>
            <person name="Reynolds S."/>
            <person name="Rieger M."/>
            <person name="Rivolta C."/>
            <person name="Rocha E."/>
            <person name="Roche B."/>
            <person name="Rose M."/>
            <person name="Sadaie Y."/>
            <person name="Sato T."/>
            <person name="Scanlan E."/>
            <person name="Schleich S."/>
            <person name="Schroeter R."/>
            <person name="Scoffone F."/>
            <person name="Sekiguchi J."/>
            <person name="Sekowska A."/>
            <person name="Seror S.J."/>
            <person name="Serror P."/>
            <person name="Shin B.-S."/>
            <person name="Soldo B."/>
            <person name="Sorokin A."/>
            <person name="Tacconi E."/>
            <person name="Takagi T."/>
            <person name="Takahashi H."/>
            <person name="Takemaru K."/>
            <person name="Takeuchi M."/>
            <person name="Tamakoshi A."/>
            <person name="Tanaka T."/>
            <person name="Terpstra P."/>
            <person name="Tognoni A."/>
            <person name="Tosato V."/>
            <person name="Uchiyama S."/>
            <person name="Vandenbol M."/>
            <person name="Vannier F."/>
            <person name="Vassarotti A."/>
            <person name="Viari A."/>
            <person name="Wambutt R."/>
            <person name="Wedler E."/>
            <person name="Wedler H."/>
            <person name="Weitzenegger T."/>
            <person name="Winters P."/>
            <person name="Wipat A."/>
            <person name="Yamamoto H."/>
            <person name="Yamane K."/>
            <person name="Yasumoto K."/>
            <person name="Yata K."/>
            <person name="Yoshida K."/>
            <person name="Yoshikawa H.-F."/>
            <person name="Zumstein E."/>
            <person name="Yoshikawa H."/>
            <person name="Danchin A."/>
        </authorList>
    </citation>
    <scope>NUCLEOTIDE SEQUENCE [LARGE SCALE GENOMIC DNA]</scope>
    <source>
        <strain>168</strain>
    </source>
</reference>
<reference key="2">
    <citation type="journal article" date="2006" name="J. Bacteriol.">
        <title>Novel conserved assembly factor of the bacterial flagellum.</title>
        <authorList>
            <person name="Titz B."/>
            <person name="Rajagopala S.V."/>
            <person name="Ester C."/>
            <person name="Haeuser R."/>
            <person name="Uetz P."/>
        </authorList>
    </citation>
    <scope>INTERACTION WITH FLIW</scope>
    <source>
        <strain>168</strain>
    </source>
</reference>
<reference key="3">
    <citation type="journal article" date="2009" name="Microbiology">
        <title>Identification of genes required for different stages of dendritic swarming in Bacillus subtilis, with a novel role for phrC.</title>
        <authorList>
            <person name="Hamze K."/>
            <person name="Julkowska D."/>
            <person name="Autret S."/>
            <person name="Hinc K."/>
            <person name="Nagorska K."/>
            <person name="Sekowska A."/>
            <person name="Holland I.B."/>
            <person name="Seror S.J."/>
        </authorList>
    </citation>
    <scope>DISRUPTION PHENOTYPE</scope>
    <source>
        <strain>168</strain>
    </source>
</reference>
<sequence length="160" mass="17315">MDALIEEVDGISNRTEFNGKKLLDGTETDGFTFQIGANAGQQLTVNIDSMSSTALGVNALNVTDFANTPFDTQLESIDTAINNVSNQRAKLGAVQNRLEHTINNLGASSENLTAAESRIRDVDMAKEMSEFTKNNIPSQASQAMLAQANQQPQNVLQLLR</sequence>